<reference key="1">
    <citation type="journal article" date="1995" name="Microbiology">
        <title>Determination of a 21548 bp nucleotide sequence around the 24 degrees region of the Bacillus subtilis chromosome.</title>
        <authorList>
            <person name="Ogawa K."/>
            <person name="Akagawa E."/>
            <person name="Nakamura K."/>
            <person name="Yamane K."/>
        </authorList>
    </citation>
    <scope>NUCLEOTIDE SEQUENCE [GENOMIC DNA]</scope>
    <source>
        <strain>168</strain>
    </source>
</reference>
<reference key="2">
    <citation type="journal article" date="1997" name="Nature">
        <title>The complete genome sequence of the Gram-positive bacterium Bacillus subtilis.</title>
        <authorList>
            <person name="Kunst F."/>
            <person name="Ogasawara N."/>
            <person name="Moszer I."/>
            <person name="Albertini A.M."/>
            <person name="Alloni G."/>
            <person name="Azevedo V."/>
            <person name="Bertero M.G."/>
            <person name="Bessieres P."/>
            <person name="Bolotin A."/>
            <person name="Borchert S."/>
            <person name="Borriss R."/>
            <person name="Boursier L."/>
            <person name="Brans A."/>
            <person name="Braun M."/>
            <person name="Brignell S.C."/>
            <person name="Bron S."/>
            <person name="Brouillet S."/>
            <person name="Bruschi C.V."/>
            <person name="Caldwell B."/>
            <person name="Capuano V."/>
            <person name="Carter N.M."/>
            <person name="Choi S.-K."/>
            <person name="Codani J.-J."/>
            <person name="Connerton I.F."/>
            <person name="Cummings N.J."/>
            <person name="Daniel R.A."/>
            <person name="Denizot F."/>
            <person name="Devine K.M."/>
            <person name="Duesterhoeft A."/>
            <person name="Ehrlich S.D."/>
            <person name="Emmerson P.T."/>
            <person name="Entian K.-D."/>
            <person name="Errington J."/>
            <person name="Fabret C."/>
            <person name="Ferrari E."/>
            <person name="Foulger D."/>
            <person name="Fritz C."/>
            <person name="Fujita M."/>
            <person name="Fujita Y."/>
            <person name="Fuma S."/>
            <person name="Galizzi A."/>
            <person name="Galleron N."/>
            <person name="Ghim S.-Y."/>
            <person name="Glaser P."/>
            <person name="Goffeau A."/>
            <person name="Golightly E.J."/>
            <person name="Grandi G."/>
            <person name="Guiseppi G."/>
            <person name="Guy B.J."/>
            <person name="Haga K."/>
            <person name="Haiech J."/>
            <person name="Harwood C.R."/>
            <person name="Henaut A."/>
            <person name="Hilbert H."/>
            <person name="Holsappel S."/>
            <person name="Hosono S."/>
            <person name="Hullo M.-F."/>
            <person name="Itaya M."/>
            <person name="Jones L.-M."/>
            <person name="Joris B."/>
            <person name="Karamata D."/>
            <person name="Kasahara Y."/>
            <person name="Klaerr-Blanchard M."/>
            <person name="Klein C."/>
            <person name="Kobayashi Y."/>
            <person name="Koetter P."/>
            <person name="Koningstein G."/>
            <person name="Krogh S."/>
            <person name="Kumano M."/>
            <person name="Kurita K."/>
            <person name="Lapidus A."/>
            <person name="Lardinois S."/>
            <person name="Lauber J."/>
            <person name="Lazarevic V."/>
            <person name="Lee S.-M."/>
            <person name="Levine A."/>
            <person name="Liu H."/>
            <person name="Masuda S."/>
            <person name="Mauel C."/>
            <person name="Medigue C."/>
            <person name="Medina N."/>
            <person name="Mellado R.P."/>
            <person name="Mizuno M."/>
            <person name="Moestl D."/>
            <person name="Nakai S."/>
            <person name="Noback M."/>
            <person name="Noone D."/>
            <person name="O'Reilly M."/>
            <person name="Ogawa K."/>
            <person name="Ogiwara A."/>
            <person name="Oudega B."/>
            <person name="Park S.-H."/>
            <person name="Parro V."/>
            <person name="Pohl T.M."/>
            <person name="Portetelle D."/>
            <person name="Porwollik S."/>
            <person name="Prescott A.M."/>
            <person name="Presecan E."/>
            <person name="Pujic P."/>
            <person name="Purnelle B."/>
            <person name="Rapoport G."/>
            <person name="Rey M."/>
            <person name="Reynolds S."/>
            <person name="Rieger M."/>
            <person name="Rivolta C."/>
            <person name="Rocha E."/>
            <person name="Roche B."/>
            <person name="Rose M."/>
            <person name="Sadaie Y."/>
            <person name="Sato T."/>
            <person name="Scanlan E."/>
            <person name="Schleich S."/>
            <person name="Schroeter R."/>
            <person name="Scoffone F."/>
            <person name="Sekiguchi J."/>
            <person name="Sekowska A."/>
            <person name="Seror S.J."/>
            <person name="Serror P."/>
            <person name="Shin B.-S."/>
            <person name="Soldo B."/>
            <person name="Sorokin A."/>
            <person name="Tacconi E."/>
            <person name="Takagi T."/>
            <person name="Takahashi H."/>
            <person name="Takemaru K."/>
            <person name="Takeuchi M."/>
            <person name="Tamakoshi A."/>
            <person name="Tanaka T."/>
            <person name="Terpstra P."/>
            <person name="Tognoni A."/>
            <person name="Tosato V."/>
            <person name="Uchiyama S."/>
            <person name="Vandenbol M."/>
            <person name="Vannier F."/>
            <person name="Vassarotti A."/>
            <person name="Viari A."/>
            <person name="Wambutt R."/>
            <person name="Wedler E."/>
            <person name="Wedler H."/>
            <person name="Weitzenegger T."/>
            <person name="Winters P."/>
            <person name="Wipat A."/>
            <person name="Yamamoto H."/>
            <person name="Yamane K."/>
            <person name="Yasumoto K."/>
            <person name="Yata K."/>
            <person name="Yoshida K."/>
            <person name="Yoshikawa H.-F."/>
            <person name="Zumstein E."/>
            <person name="Yoshikawa H."/>
            <person name="Danchin A."/>
        </authorList>
    </citation>
    <scope>NUCLEOTIDE SEQUENCE [LARGE SCALE GENOMIC DNA]</scope>
    <source>
        <strain>168</strain>
    </source>
</reference>
<reference key="3">
    <citation type="journal article" date="2009" name="Microbiology">
        <title>From a consortium sequence to a unified sequence: the Bacillus subtilis 168 reference genome a decade later.</title>
        <authorList>
            <person name="Barbe V."/>
            <person name="Cruveiller S."/>
            <person name="Kunst F."/>
            <person name="Lenoble P."/>
            <person name="Meurice G."/>
            <person name="Sekowska A."/>
            <person name="Vallenet D."/>
            <person name="Wang T."/>
            <person name="Moszer I."/>
            <person name="Medigue C."/>
            <person name="Danchin A."/>
        </authorList>
    </citation>
    <scope>SEQUENCE REVISION TO 101 AND 104</scope>
</reference>
<reference key="4">
    <citation type="journal article" date="1992" name="FEBS Lett.">
        <title>Characterization of the pcp gene encoding the pyrrolidone carboxyl peptidase of Bacillus subtilis.</title>
        <authorList>
            <person name="Awade A."/>
            <person name="Cleuziat P."/>
            <person name="Gonzales T."/>
            <person name="Robert-Baudouy J."/>
        </authorList>
    </citation>
    <scope>NUCLEOTIDE SEQUENCE [GENOMIC DNA] OF 187-242</scope>
    <source>
        <strain>168</strain>
    </source>
</reference>
<reference key="5">
    <citation type="journal article" date="2000" name="J. Biol. Chem.">
        <title>TatC is a specificity determinant for protein secretion via the twin-arginine translocation pathway.</title>
        <authorList>
            <person name="Jongbloed J.D.H."/>
            <person name="Martin U."/>
            <person name="Antelmann H."/>
            <person name="Hecker M."/>
            <person name="Tjalsma H."/>
            <person name="Venema G."/>
            <person name="Bron S."/>
            <person name="van Dijl J.M."/>
            <person name="Mueller J."/>
        </authorList>
    </citation>
    <scope>IDENTIFICATION OF THE TAT GENES</scope>
    <scope>SECRETION OF PHOD</scope>
</reference>
<reference key="6">
    <citation type="journal article" date="2003" name="J. Biol. Chem.">
        <title>Sequence-specific binding of prePhoD to soluble TatAd indicates protein-mediated targeting of the Tat export in Bacillus subtilis.</title>
        <authorList>
            <person name="Pop O.I."/>
            <person name="Westermann M."/>
            <person name="Volkmer-Engert R."/>
            <person name="Schulz D."/>
            <person name="Lemke C."/>
            <person name="Schreiber S."/>
            <person name="Gerlach R."/>
            <person name="Wetzker R."/>
            <person name="Mueller J.P."/>
        </authorList>
    </citation>
    <scope>SUBCELLULAR LOCATION</scope>
</reference>
<reference key="7">
    <citation type="journal article" date="2004" name="Mol. Microbiol.">
        <title>Two minimal Tat translocases in Bacillus.</title>
        <authorList>
            <person name="Jongbloed J.D.H."/>
            <person name="Grieger U."/>
            <person name="Antelmann H."/>
            <person name="Hecker M."/>
            <person name="Nijland R."/>
            <person name="Bron S."/>
            <person name="van Dijl J.M."/>
        </authorList>
    </citation>
    <scope>CHARACTERIZATION OF THE TWO TAT TRANSLOCASE SYSTEMS</scope>
</reference>
<reference key="8">
    <citation type="journal article" date="2006" name="J. Biol. Chem.">
        <title>Affinity of TatCd for TatAd elucidates its receptor function in the Bacillus subtilis twin arginine translocation (Tat) translocase system.</title>
        <authorList>
            <person name="Schreiber S."/>
            <person name="Stengel R."/>
            <person name="Westermann M."/>
            <person name="Volkmer-Engert R."/>
            <person name="Pop O.I."/>
            <person name="Mueller J.P."/>
        </authorList>
    </citation>
    <scope>INTERACTION WITH TATAD</scope>
    <scope>DISRUPTION PHENOTYPE</scope>
</reference>
<reference key="9">
    <citation type="journal article" date="2008" name="J. Biol. Chem.">
        <title>A minimal Tat system from a gram-positive organism: a bifunctional TatA subunit participates in discrete TatAC and TatA complexes.</title>
        <authorList>
            <person name="Barnett J.P."/>
            <person name="Eijlander R.T."/>
            <person name="Kuipers O.P."/>
            <person name="Robinson C."/>
        </authorList>
    </citation>
    <scope>FUNCTION</scope>
    <scope>SUBUNIT</scope>
    <source>
        <strain>168</strain>
    </source>
</reference>
<evidence type="ECO:0000255" key="1">
    <source>
        <dbReference type="HAMAP-Rule" id="MF_00902"/>
    </source>
</evidence>
<evidence type="ECO:0000269" key="2">
    <source>
    </source>
</evidence>
<evidence type="ECO:0000269" key="3">
    <source>
    </source>
</evidence>
<evidence type="ECO:0000269" key="4">
    <source>
    </source>
</evidence>
<evidence type="ECO:0000305" key="5"/>
<feature type="chain" id="PRO_0000098095" description="Sec-independent protein translocase protein TatCd">
    <location>
        <begin position="1"/>
        <end position="242"/>
    </location>
</feature>
<feature type="transmembrane region" description="Helical" evidence="1">
    <location>
        <begin position="19"/>
        <end position="39"/>
    </location>
</feature>
<feature type="transmembrane region" description="Helical" evidence="1">
    <location>
        <begin position="60"/>
        <end position="80"/>
    </location>
</feature>
<feature type="transmembrane region" description="Helical" evidence="1">
    <location>
        <begin position="107"/>
        <end position="127"/>
    </location>
</feature>
<feature type="transmembrane region" description="Helical" evidence="1">
    <location>
        <begin position="150"/>
        <end position="170"/>
    </location>
</feature>
<feature type="transmembrane region" description="Helical" evidence="1">
    <location>
        <begin position="188"/>
        <end position="208"/>
    </location>
</feature>
<feature type="transmembrane region" description="Helical" evidence="1">
    <location>
        <begin position="209"/>
        <end position="229"/>
    </location>
</feature>
<feature type="region of interest" description="Interaction with TatAd">
    <location>
        <begin position="128"/>
        <end position="149"/>
    </location>
</feature>
<feature type="region of interest" description="Interaction with TatAd">
    <location>
        <begin position="171"/>
        <end position="187"/>
    </location>
</feature>
<feature type="sequence conflict" description="In Ref. 1; BAA06484." evidence="5" ref="1">
    <original>L</original>
    <variation>I</variation>
    <location>
        <position position="101"/>
    </location>
</feature>
<feature type="sequence conflict" description="In Ref. 1; BAA06484." evidence="5" ref="1">
    <original>I</original>
    <variation>IMYI</variation>
    <location>
        <position position="104"/>
    </location>
</feature>
<proteinExistence type="evidence at protein level"/>
<protein>
    <recommendedName>
        <fullName evidence="1">Sec-independent protein translocase protein TatCd</fullName>
    </recommendedName>
</protein>
<gene>
    <name evidence="1" type="primary">tatC1</name>
    <name type="synonym">tatCd</name>
    <name type="synonym">ycbT</name>
    <name type="ordered locus">BSU02640</name>
</gene>
<name>TATCD_BACSU</name>
<comment type="function">
    <text evidence="1 4">Part of the twin-arginine translocation (Tat) system that transports large folded proteins containing a characteristic twin-arginine motif in their signal peptide across membranes. Required for PhoD secretion. TatCd promotes membrane localization of TatAd via domain specific interactions. TatCd is required for stabile production of TatAd as well as for its maintenance.</text>
</comment>
<comment type="subunit">
    <text evidence="1 4">Forms a complex with TatAd. Two types of complexes exist: one composed of TatAd and TatCd, and another composed only of TatAd.</text>
</comment>
<comment type="subcellular location">
    <subcellularLocation>
        <location evidence="1 2">Cell membrane</location>
        <topology evidence="1 2">Multi-pass membrane protein</topology>
    </subcellularLocation>
</comment>
<comment type="induction">
    <text>Expressed under conditions of phosphate starvation.</text>
</comment>
<comment type="disruption phenotype">
    <text evidence="3">Depletion of TatCd results in a drastic reduction of TatAd.</text>
</comment>
<comment type="miscellaneous">
    <text>B.subtilis possesses two minimal, substrate-specific, Tat translocases: TatAd-TatCd and TatAy-TatCy, each one composed of a TatA and a TatC protein. TatA is bifunctional and performs the function of both the TatA and TatB proteins of Gram-negative organisms.</text>
</comment>
<comment type="similarity">
    <text evidence="1">Belongs to the TatC family.</text>
</comment>
<comment type="sequence caution" evidence="5">
    <conflict type="frameshift">
        <sequence resource="EMBL-CDS" id="BAA06484"/>
    </conflict>
</comment>
<sequence length="242" mass="27706">MDKKETHLIGHLEELRRRIIVTLAAFFLFLITAFLFVQDIYDWLIRDLDGKLAVLGPSEILWVYMMLSGICAIAASIPVAAYQLWRFVAPALTKTERKVTLMYIPGLFALFLAGISFGYFVLFPIVLSFLTHLSSGHFETMFTADRYFRFMVNLSLPFGFLFEMPLVVMFLTRLGILNPYRLAKARKLSYFLLIVVSILITPPDFISDFLVMIPLLVLFEVSVTLSAFVYKKRMREETAAAA</sequence>
<organism>
    <name type="scientific">Bacillus subtilis (strain 168)</name>
    <dbReference type="NCBI Taxonomy" id="224308"/>
    <lineage>
        <taxon>Bacteria</taxon>
        <taxon>Bacillati</taxon>
        <taxon>Bacillota</taxon>
        <taxon>Bacilli</taxon>
        <taxon>Bacillales</taxon>
        <taxon>Bacillaceae</taxon>
        <taxon>Bacillus</taxon>
    </lineage>
</organism>
<accession>P42252</accession>
<accession>O31468</accession>
<keyword id="KW-1003">Cell membrane</keyword>
<keyword id="KW-0472">Membrane</keyword>
<keyword id="KW-0653">Protein transport</keyword>
<keyword id="KW-1185">Reference proteome</keyword>
<keyword id="KW-0811">Translocation</keyword>
<keyword id="KW-0812">Transmembrane</keyword>
<keyword id="KW-1133">Transmembrane helix</keyword>
<keyword id="KW-0813">Transport</keyword>
<dbReference type="EMBL" id="D30808">
    <property type="protein sequence ID" value="BAA06484.1"/>
    <property type="status" value="ALT_FRAME"/>
    <property type="molecule type" value="Genomic_DNA"/>
</dbReference>
<dbReference type="EMBL" id="AL009126">
    <property type="protein sequence ID" value="CAB12058.2"/>
    <property type="molecule type" value="Genomic_DNA"/>
</dbReference>
<dbReference type="EMBL" id="X66034">
    <property type="status" value="NOT_ANNOTATED_CDS"/>
    <property type="molecule type" value="Genomic_DNA"/>
</dbReference>
<dbReference type="PIR" id="D69754">
    <property type="entry name" value="D69754"/>
</dbReference>
<dbReference type="RefSeq" id="NP_388146.2">
    <property type="nucleotide sequence ID" value="NC_000964.3"/>
</dbReference>
<dbReference type="SMR" id="P42252"/>
<dbReference type="FunCoup" id="P42252">
    <property type="interactions" value="579"/>
</dbReference>
<dbReference type="IntAct" id="P42252">
    <property type="interactions" value="24"/>
</dbReference>
<dbReference type="STRING" id="224308.BSU02640"/>
<dbReference type="TCDB" id="2.A.64.3.1">
    <property type="family name" value="the twin arginine targeting (tat) family"/>
</dbReference>
<dbReference type="PaxDb" id="224308-BSU02640"/>
<dbReference type="EnsemblBacteria" id="CAB12058">
    <property type="protein sequence ID" value="CAB12058"/>
    <property type="gene ID" value="BSU_02640"/>
</dbReference>
<dbReference type="GeneID" id="938395"/>
<dbReference type="KEGG" id="bsu:BSU02640"/>
<dbReference type="PATRIC" id="fig|224308.179.peg.274"/>
<dbReference type="eggNOG" id="COG0805">
    <property type="taxonomic scope" value="Bacteria"/>
</dbReference>
<dbReference type="InParanoid" id="P42252"/>
<dbReference type="OrthoDB" id="9777044at2"/>
<dbReference type="PhylomeDB" id="P42252"/>
<dbReference type="BioCyc" id="BSUB:BSU02640-MONOMER"/>
<dbReference type="Proteomes" id="UP000001570">
    <property type="component" value="Chromosome"/>
</dbReference>
<dbReference type="GO" id="GO:0033281">
    <property type="term" value="C:TAT protein transport complex"/>
    <property type="evidence" value="ECO:0000318"/>
    <property type="project" value="GO_Central"/>
</dbReference>
<dbReference type="GO" id="GO:0009977">
    <property type="term" value="F:proton motive force dependent protein transmembrane transporter activity"/>
    <property type="evidence" value="ECO:0000318"/>
    <property type="project" value="GO_Central"/>
</dbReference>
<dbReference type="GO" id="GO:0065002">
    <property type="term" value="P:intracellular protein transmembrane transport"/>
    <property type="evidence" value="ECO:0000318"/>
    <property type="project" value="GO_Central"/>
</dbReference>
<dbReference type="GO" id="GO:0043953">
    <property type="term" value="P:protein transport by the Tat complex"/>
    <property type="evidence" value="ECO:0000318"/>
    <property type="project" value="GO_Central"/>
</dbReference>
<dbReference type="HAMAP" id="MF_00902">
    <property type="entry name" value="TatC"/>
    <property type="match status" value="1"/>
</dbReference>
<dbReference type="InterPro" id="IPR019820">
    <property type="entry name" value="Sec-indep_translocase_CS"/>
</dbReference>
<dbReference type="InterPro" id="IPR002033">
    <property type="entry name" value="TatC"/>
</dbReference>
<dbReference type="NCBIfam" id="TIGR00945">
    <property type="entry name" value="tatC"/>
    <property type="match status" value="1"/>
</dbReference>
<dbReference type="PANTHER" id="PTHR30371">
    <property type="entry name" value="SEC-INDEPENDENT PROTEIN TRANSLOCASE PROTEIN TATC"/>
    <property type="match status" value="1"/>
</dbReference>
<dbReference type="PANTHER" id="PTHR30371:SF4">
    <property type="entry name" value="SEC-INDEPENDENT PROTEIN TRANSLOCASE PROTEIN TATCD"/>
    <property type="match status" value="1"/>
</dbReference>
<dbReference type="Pfam" id="PF00902">
    <property type="entry name" value="TatC"/>
    <property type="match status" value="1"/>
</dbReference>
<dbReference type="PRINTS" id="PR01840">
    <property type="entry name" value="TATCFAMILY"/>
</dbReference>
<dbReference type="PROSITE" id="PS01218">
    <property type="entry name" value="TATC"/>
    <property type="match status" value="1"/>
</dbReference>